<organism>
    <name type="scientific">Bacillus thuringiensis subsp. konkukian (strain 97-27)</name>
    <dbReference type="NCBI Taxonomy" id="281309"/>
    <lineage>
        <taxon>Bacteria</taxon>
        <taxon>Bacillati</taxon>
        <taxon>Bacillota</taxon>
        <taxon>Bacilli</taxon>
        <taxon>Bacillales</taxon>
        <taxon>Bacillaceae</taxon>
        <taxon>Bacillus</taxon>
        <taxon>Bacillus cereus group</taxon>
    </lineage>
</organism>
<accession>Q6HBF1</accession>
<reference key="1">
    <citation type="journal article" date="2006" name="J. Bacteriol.">
        <title>Pathogenomic sequence analysis of Bacillus cereus and Bacillus thuringiensis isolates closely related to Bacillus anthracis.</title>
        <authorList>
            <person name="Han C.S."/>
            <person name="Xie G."/>
            <person name="Challacombe J.F."/>
            <person name="Altherr M.R."/>
            <person name="Bhotika S.S."/>
            <person name="Bruce D."/>
            <person name="Campbell C.S."/>
            <person name="Campbell M.L."/>
            <person name="Chen J."/>
            <person name="Chertkov O."/>
            <person name="Cleland C."/>
            <person name="Dimitrijevic M."/>
            <person name="Doggett N.A."/>
            <person name="Fawcett J.J."/>
            <person name="Glavina T."/>
            <person name="Goodwin L.A."/>
            <person name="Hill K.K."/>
            <person name="Hitchcock P."/>
            <person name="Jackson P.J."/>
            <person name="Keim P."/>
            <person name="Kewalramani A.R."/>
            <person name="Longmire J."/>
            <person name="Lucas S."/>
            <person name="Malfatti S."/>
            <person name="McMurry K."/>
            <person name="Meincke L.J."/>
            <person name="Misra M."/>
            <person name="Moseman B.L."/>
            <person name="Mundt M."/>
            <person name="Munk A.C."/>
            <person name="Okinaka R.T."/>
            <person name="Parson-Quintana B."/>
            <person name="Reilly L.P."/>
            <person name="Richardson P."/>
            <person name="Robinson D.L."/>
            <person name="Rubin E."/>
            <person name="Saunders E."/>
            <person name="Tapia R."/>
            <person name="Tesmer J.G."/>
            <person name="Thayer N."/>
            <person name="Thompson L.S."/>
            <person name="Tice H."/>
            <person name="Ticknor L.O."/>
            <person name="Wills P.L."/>
            <person name="Brettin T.S."/>
            <person name="Gilna P."/>
        </authorList>
    </citation>
    <scope>NUCLEOTIDE SEQUENCE [LARGE SCALE GENOMIC DNA]</scope>
    <source>
        <strain>97-27</strain>
    </source>
</reference>
<gene>
    <name evidence="1" type="primary">tpiA</name>
    <name type="ordered locus">BT9727_4816</name>
</gene>
<dbReference type="EC" id="5.3.1.1" evidence="1"/>
<dbReference type="EMBL" id="AE017355">
    <property type="protein sequence ID" value="AAT61095.1"/>
    <property type="molecule type" value="Genomic_DNA"/>
</dbReference>
<dbReference type="RefSeq" id="WP_001231038.1">
    <property type="nucleotide sequence ID" value="NC_005957.1"/>
</dbReference>
<dbReference type="RefSeq" id="YP_039125.1">
    <property type="nucleotide sequence ID" value="NC_005957.1"/>
</dbReference>
<dbReference type="SMR" id="Q6HBF1"/>
<dbReference type="GeneID" id="93005983"/>
<dbReference type="KEGG" id="btk:BT9727_4816"/>
<dbReference type="PATRIC" id="fig|281309.8.peg.5122"/>
<dbReference type="HOGENOM" id="CLU_024251_2_3_9"/>
<dbReference type="UniPathway" id="UPA00109">
    <property type="reaction ID" value="UER00189"/>
</dbReference>
<dbReference type="UniPathway" id="UPA00138"/>
<dbReference type="Proteomes" id="UP000001301">
    <property type="component" value="Chromosome"/>
</dbReference>
<dbReference type="GO" id="GO:0005829">
    <property type="term" value="C:cytosol"/>
    <property type="evidence" value="ECO:0007669"/>
    <property type="project" value="TreeGrafter"/>
</dbReference>
<dbReference type="GO" id="GO:0004807">
    <property type="term" value="F:triose-phosphate isomerase activity"/>
    <property type="evidence" value="ECO:0007669"/>
    <property type="project" value="UniProtKB-UniRule"/>
</dbReference>
<dbReference type="GO" id="GO:0006094">
    <property type="term" value="P:gluconeogenesis"/>
    <property type="evidence" value="ECO:0007669"/>
    <property type="project" value="UniProtKB-UniRule"/>
</dbReference>
<dbReference type="GO" id="GO:0046166">
    <property type="term" value="P:glyceraldehyde-3-phosphate biosynthetic process"/>
    <property type="evidence" value="ECO:0007669"/>
    <property type="project" value="TreeGrafter"/>
</dbReference>
<dbReference type="GO" id="GO:0019563">
    <property type="term" value="P:glycerol catabolic process"/>
    <property type="evidence" value="ECO:0007669"/>
    <property type="project" value="TreeGrafter"/>
</dbReference>
<dbReference type="GO" id="GO:0006096">
    <property type="term" value="P:glycolytic process"/>
    <property type="evidence" value="ECO:0007669"/>
    <property type="project" value="UniProtKB-UniRule"/>
</dbReference>
<dbReference type="CDD" id="cd00311">
    <property type="entry name" value="TIM"/>
    <property type="match status" value="1"/>
</dbReference>
<dbReference type="FunFam" id="3.20.20.70:FF:000016">
    <property type="entry name" value="Triosephosphate isomerase"/>
    <property type="match status" value="1"/>
</dbReference>
<dbReference type="Gene3D" id="3.20.20.70">
    <property type="entry name" value="Aldolase class I"/>
    <property type="match status" value="1"/>
</dbReference>
<dbReference type="HAMAP" id="MF_00147_B">
    <property type="entry name" value="TIM_B"/>
    <property type="match status" value="1"/>
</dbReference>
<dbReference type="InterPro" id="IPR013785">
    <property type="entry name" value="Aldolase_TIM"/>
</dbReference>
<dbReference type="InterPro" id="IPR035990">
    <property type="entry name" value="TIM_sf"/>
</dbReference>
<dbReference type="InterPro" id="IPR022896">
    <property type="entry name" value="TrioseP_Isoase_bac/euk"/>
</dbReference>
<dbReference type="InterPro" id="IPR000652">
    <property type="entry name" value="Triosephosphate_isomerase"/>
</dbReference>
<dbReference type="InterPro" id="IPR020861">
    <property type="entry name" value="Triosephosphate_isomerase_AS"/>
</dbReference>
<dbReference type="NCBIfam" id="TIGR00419">
    <property type="entry name" value="tim"/>
    <property type="match status" value="1"/>
</dbReference>
<dbReference type="PANTHER" id="PTHR21139">
    <property type="entry name" value="TRIOSEPHOSPHATE ISOMERASE"/>
    <property type="match status" value="1"/>
</dbReference>
<dbReference type="PANTHER" id="PTHR21139:SF42">
    <property type="entry name" value="TRIOSEPHOSPHATE ISOMERASE"/>
    <property type="match status" value="1"/>
</dbReference>
<dbReference type="Pfam" id="PF00121">
    <property type="entry name" value="TIM"/>
    <property type="match status" value="1"/>
</dbReference>
<dbReference type="SUPFAM" id="SSF51351">
    <property type="entry name" value="Triosephosphate isomerase (TIM)"/>
    <property type="match status" value="1"/>
</dbReference>
<dbReference type="PROSITE" id="PS00171">
    <property type="entry name" value="TIM_1"/>
    <property type="match status" value="1"/>
</dbReference>
<dbReference type="PROSITE" id="PS51440">
    <property type="entry name" value="TIM_2"/>
    <property type="match status" value="1"/>
</dbReference>
<evidence type="ECO:0000255" key="1">
    <source>
        <dbReference type="HAMAP-Rule" id="MF_00147"/>
    </source>
</evidence>
<proteinExistence type="inferred from homology"/>
<keyword id="KW-0963">Cytoplasm</keyword>
<keyword id="KW-0312">Gluconeogenesis</keyword>
<keyword id="KW-0324">Glycolysis</keyword>
<keyword id="KW-0413">Isomerase</keyword>
<keyword id="KW-0597">Phosphoprotein</keyword>
<comment type="function">
    <text evidence="1">Involved in the gluconeogenesis. Catalyzes stereospecifically the conversion of dihydroxyacetone phosphate (DHAP) to D-glyceraldehyde-3-phosphate (G3P).</text>
</comment>
<comment type="catalytic activity">
    <reaction evidence="1">
        <text>D-glyceraldehyde 3-phosphate = dihydroxyacetone phosphate</text>
        <dbReference type="Rhea" id="RHEA:18585"/>
        <dbReference type="ChEBI" id="CHEBI:57642"/>
        <dbReference type="ChEBI" id="CHEBI:59776"/>
        <dbReference type="EC" id="5.3.1.1"/>
    </reaction>
</comment>
<comment type="pathway">
    <text evidence="1">Carbohydrate biosynthesis; gluconeogenesis.</text>
</comment>
<comment type="pathway">
    <text evidence="1">Carbohydrate degradation; glycolysis; D-glyceraldehyde 3-phosphate from glycerone phosphate: step 1/1.</text>
</comment>
<comment type="subunit">
    <text evidence="1">Homodimer.</text>
</comment>
<comment type="subcellular location">
    <subcellularLocation>
        <location evidence="1">Cytoplasm</location>
    </subcellularLocation>
</comment>
<comment type="similarity">
    <text evidence="1">Belongs to the triosephosphate isomerase family.</text>
</comment>
<sequence>MRKPIIAGNWKMNKTLSEAVSFVEEVKGQIPAASAVDAVVCSPALFLERLVAATEGTDLQVGAQNMHFEKNGAFTGEISPVALSDLKVGYVVLGHSERREMFAETDESVNKKTIAAFEHGLTPIVCCGETLEERESGKTFDLVAGQVTKALAGLTEEQVKATVIAYEPIWAIGTGKSSSSADANEVCAHIRKVVAEAVSPEAAEAVRIQYGGSVKPENIKEYMAQSDIDGALVGGASLEPASFLGLLGAVK</sequence>
<name>TPIS_BACHK</name>
<feature type="chain" id="PRO_0000307429" description="Triosephosphate isomerase">
    <location>
        <begin position="1"/>
        <end position="251"/>
    </location>
</feature>
<feature type="active site" description="Electrophile" evidence="1">
    <location>
        <position position="95"/>
    </location>
</feature>
<feature type="active site" description="Proton acceptor" evidence="1">
    <location>
        <position position="167"/>
    </location>
</feature>
<feature type="binding site" evidence="1">
    <location>
        <begin position="9"/>
        <end position="11"/>
    </location>
    <ligand>
        <name>substrate</name>
    </ligand>
</feature>
<feature type="binding site" evidence="1">
    <location>
        <position position="173"/>
    </location>
    <ligand>
        <name>substrate</name>
    </ligand>
</feature>
<feature type="binding site" evidence="1">
    <location>
        <position position="213"/>
    </location>
    <ligand>
        <name>substrate</name>
    </ligand>
</feature>
<feature type="binding site" evidence="1">
    <location>
        <begin position="234"/>
        <end position="235"/>
    </location>
    <ligand>
        <name>substrate</name>
    </ligand>
</feature>
<feature type="modified residue" description="Phosphoserine" evidence="1">
    <location>
        <position position="213"/>
    </location>
</feature>
<protein>
    <recommendedName>
        <fullName evidence="1">Triosephosphate isomerase</fullName>
        <shortName evidence="1">TIM</shortName>
        <shortName evidence="1">TPI</shortName>
        <ecNumber evidence="1">5.3.1.1</ecNumber>
    </recommendedName>
    <alternativeName>
        <fullName evidence="1">Triose-phosphate isomerase</fullName>
    </alternativeName>
</protein>